<comment type="subcellular location">
    <subcellularLocation>
        <location evidence="3">Parasitophorous vacuole membrane</location>
    </subcellularLocation>
</comment>
<comment type="miscellaneous">
    <text>This protein is addressed to a new compartment within the cytoplasm of the infected red cell. It also surrounds the parasite, probably in the parasitophorous vacuole membrane.</text>
</comment>
<comment type="miscellaneous">
    <text>This antigen and the circumsporozoite protein appear to have a common epitope.</text>
</comment>
<organism>
    <name type="scientific">Plasmodium falciparum</name>
    <dbReference type="NCBI Taxonomy" id="5833"/>
    <lineage>
        <taxon>Eukaryota</taxon>
        <taxon>Sar</taxon>
        <taxon>Alveolata</taxon>
        <taxon>Apicomplexa</taxon>
        <taxon>Aconoidasida</taxon>
        <taxon>Haemosporida</taxon>
        <taxon>Plasmodiidae</taxon>
        <taxon>Plasmodium</taxon>
        <taxon>Plasmodium (Laverania)</taxon>
    </lineage>
</organism>
<evidence type="ECO:0000255" key="1"/>
<evidence type="ECO:0000256" key="2">
    <source>
        <dbReference type="SAM" id="MobiDB-lite"/>
    </source>
</evidence>
<evidence type="ECO:0000305" key="3"/>
<feature type="signal peptide">
    <location>
        <begin position="1"/>
        <end position="22"/>
    </location>
</feature>
<feature type="chain" id="PRO_0000024537" description="Malaria protein EXP-1">
    <location>
        <begin position="23"/>
        <end position="162"/>
    </location>
</feature>
<feature type="transmembrane region" description="Helical" evidence="1">
    <location>
        <begin position="80"/>
        <end position="101"/>
    </location>
</feature>
<feature type="region of interest" description="Disordered" evidence="2">
    <location>
        <begin position="109"/>
        <end position="162"/>
    </location>
</feature>
<feature type="region of interest" description="Epitope (deduced)">
    <location>
        <begin position="120"/>
        <end position="137"/>
    </location>
</feature>
<feature type="compositionally biased region" description="Low complexity" evidence="2">
    <location>
        <begin position="114"/>
        <end position="130"/>
    </location>
</feature>
<feature type="compositionally biased region" description="Polar residues" evidence="2">
    <location>
        <begin position="137"/>
        <end position="162"/>
    </location>
</feature>
<feature type="sequence variant" description="In Ag5.1 negative strains.">
    <original>D</original>
    <variation>G</variation>
    <location>
        <position position="136"/>
    </location>
</feature>
<feature type="sequence variant" description="In strain: Palo Alto17 and 3D7.">
    <original>P</original>
    <variation>T</variation>
    <location>
        <position position="160"/>
    </location>
</feature>
<feature type="sequence conflict" description="In Ref. 2; CAA25881." evidence="3" ref="2">
    <original>V</original>
    <variation>A</variation>
    <location>
        <position position="10"/>
    </location>
</feature>
<name>EXP1_PLAFA</name>
<keyword id="KW-0461">Malaria</keyword>
<keyword id="KW-0472">Membrane</keyword>
<keyword id="KW-0732">Signal</keyword>
<keyword id="KW-0748">Sporozoite</keyword>
<keyword id="KW-0812">Transmembrane</keyword>
<keyword id="KW-1133">Transmembrane helix</keyword>
<accession>P04926</accession>
<accession>P06718</accession>
<dbReference type="EMBL" id="X05074">
    <property type="protein sequence ID" value="CAA28735.1"/>
    <property type="molecule type" value="Genomic_DNA"/>
</dbReference>
<dbReference type="EMBL" id="X01745">
    <property type="protein sequence ID" value="CAA25881.1"/>
    <property type="molecule type" value="mRNA"/>
</dbReference>
<dbReference type="PIR" id="A23052">
    <property type="entry name" value="YAZQ51"/>
</dbReference>
<dbReference type="PIR" id="A26769">
    <property type="entry name" value="A26769"/>
</dbReference>
<dbReference type="IntAct" id="P04926">
    <property type="interactions" value="1"/>
</dbReference>
<dbReference type="MINT" id="P04926"/>
<dbReference type="DrugBank" id="DB09274">
    <property type="generic name" value="Artesunate"/>
</dbReference>
<dbReference type="VEuPathDB" id="PlasmoDB:PF3D7_1121600"/>
<dbReference type="VEuPathDB" id="PlasmoDB:Pf7G8-2_000344300"/>
<dbReference type="VEuPathDB" id="PlasmoDB:Pf7G8_110025200"/>
<dbReference type="VEuPathDB" id="PlasmoDB:PfCD01_110027000"/>
<dbReference type="VEuPathDB" id="PlasmoDB:PfDd2_110024600"/>
<dbReference type="VEuPathDB" id="PlasmoDB:PfGA01_110025800"/>
<dbReference type="VEuPathDB" id="PlasmoDB:PfGB4_110028100"/>
<dbReference type="VEuPathDB" id="PlasmoDB:PfGN01_110026100"/>
<dbReference type="VEuPathDB" id="PlasmoDB:PfHB3_110024800"/>
<dbReference type="VEuPathDB" id="PlasmoDB:PfIT_110025900"/>
<dbReference type="VEuPathDB" id="PlasmoDB:PfKE01_110026100"/>
<dbReference type="VEuPathDB" id="PlasmoDB:PfKH01_110025700"/>
<dbReference type="VEuPathDB" id="PlasmoDB:PfKH02_110026600"/>
<dbReference type="VEuPathDB" id="PlasmoDB:PfML01_110026400"/>
<dbReference type="VEuPathDB" id="PlasmoDB:PfNF135_110024700"/>
<dbReference type="VEuPathDB" id="PlasmoDB:PfNF166_110025000"/>
<dbReference type="VEuPathDB" id="PlasmoDB:PfNF54_110025900"/>
<dbReference type="VEuPathDB" id="PlasmoDB:PfSD01_110024200"/>
<dbReference type="VEuPathDB" id="PlasmoDB:PfSN01_110024700"/>
<dbReference type="VEuPathDB" id="PlasmoDB:PfTG01_110026000"/>
<dbReference type="GO" id="GO:0016020">
    <property type="term" value="C:membrane"/>
    <property type="evidence" value="ECO:0007669"/>
    <property type="project" value="UniProtKB-KW"/>
</dbReference>
<dbReference type="GO" id="GO:0020005">
    <property type="term" value="C:symbiont-containing vacuole membrane"/>
    <property type="evidence" value="ECO:0007669"/>
    <property type="project" value="UniProtKB-SubCell"/>
</dbReference>
<dbReference type="Pfam" id="PF06589">
    <property type="entry name" value="CRA"/>
    <property type="match status" value="1"/>
</dbReference>
<protein>
    <recommendedName>
        <fullName>Malaria protein EXP-1</fullName>
    </recommendedName>
    <alternativeName>
        <fullName>Exported antigen AG 5.1</fullName>
    </alternativeName>
</protein>
<sequence>MKILSVFFLVLFFIIFNKESLAEKTNKETGSGVSSKKKNKKGSGEPLIDVHDLISDMIKKEEELVEVNKRKSKYKLATSVLAGLLGVVSTVLLGGVGLVLYNTEKGRHPFKIGSSDPADNANPDADSESNGEPNADPQVTAQDVTPEQPQGDDNNLVSGPEH</sequence>
<reference key="1">
    <citation type="journal article" date="1987" name="EMBO J.">
        <title>A malaria protein exported into a new compartment within the host erythrocyte.</title>
        <authorList>
            <person name="Simmons D."/>
            <person name="Woollett G."/>
            <person name="Bergin-Cartwright M."/>
            <person name="Kay D."/>
            <person name="Scaife J."/>
        </authorList>
    </citation>
    <scope>NUCLEOTIDE SEQUENCE [GENOMIC DNA]</scope>
</reference>
<reference key="2">
    <citation type="journal article" date="1985" name="Nucleic Acids Res.">
        <title>The gene for an exported antigen of the malaria parasite Plasmodium falciparum cloned and expressed in Escherichia coli.</title>
        <authorList>
            <person name="Hope I.A."/>
            <person name="McKay M."/>
            <person name="Hyde J.E."/>
            <person name="Goman M."/>
            <person name="Scaife J."/>
        </authorList>
    </citation>
    <scope>NUCLEOTIDE SEQUENCE [MRNA]</scope>
</reference>
<gene>
    <name type="primary">EXP-1</name>
</gene>
<proteinExistence type="evidence at transcript level"/>